<proteinExistence type="inferred from homology"/>
<organism>
    <name type="scientific">Burkholderia multivorans (strain ATCC 17616 / 249)</name>
    <dbReference type="NCBI Taxonomy" id="395019"/>
    <lineage>
        <taxon>Bacteria</taxon>
        <taxon>Pseudomonadati</taxon>
        <taxon>Pseudomonadota</taxon>
        <taxon>Betaproteobacteria</taxon>
        <taxon>Burkholderiales</taxon>
        <taxon>Burkholderiaceae</taxon>
        <taxon>Burkholderia</taxon>
        <taxon>Burkholderia cepacia complex</taxon>
    </lineage>
</organism>
<evidence type="ECO:0000255" key="1">
    <source>
        <dbReference type="HAMAP-Rule" id="MF_01334"/>
    </source>
</evidence>
<evidence type="ECO:0000305" key="2"/>
<dbReference type="EMBL" id="CP000868">
    <property type="protein sequence ID" value="ABX14207.1"/>
    <property type="molecule type" value="Genomic_DNA"/>
</dbReference>
<dbReference type="EMBL" id="AP009385">
    <property type="protein sequence ID" value="BAG44636.1"/>
    <property type="molecule type" value="Genomic_DNA"/>
</dbReference>
<dbReference type="RefSeq" id="WP_012212698.1">
    <property type="nucleotide sequence ID" value="NC_010804.1"/>
</dbReference>
<dbReference type="SMR" id="A9AEY7"/>
<dbReference type="STRING" id="395019.BMULJ_02748"/>
<dbReference type="KEGG" id="bmj:BMULJ_02748"/>
<dbReference type="KEGG" id="bmu:Bmul_0512"/>
<dbReference type="eggNOG" id="COG1825">
    <property type="taxonomic scope" value="Bacteria"/>
</dbReference>
<dbReference type="HOGENOM" id="CLU_075939_0_1_4"/>
<dbReference type="Proteomes" id="UP000008815">
    <property type="component" value="Chromosome 1"/>
</dbReference>
<dbReference type="GO" id="GO:0022625">
    <property type="term" value="C:cytosolic large ribosomal subunit"/>
    <property type="evidence" value="ECO:0007669"/>
    <property type="project" value="TreeGrafter"/>
</dbReference>
<dbReference type="GO" id="GO:0008097">
    <property type="term" value="F:5S rRNA binding"/>
    <property type="evidence" value="ECO:0007669"/>
    <property type="project" value="InterPro"/>
</dbReference>
<dbReference type="GO" id="GO:0003735">
    <property type="term" value="F:structural constituent of ribosome"/>
    <property type="evidence" value="ECO:0007669"/>
    <property type="project" value="InterPro"/>
</dbReference>
<dbReference type="GO" id="GO:0006412">
    <property type="term" value="P:translation"/>
    <property type="evidence" value="ECO:0007669"/>
    <property type="project" value="UniProtKB-UniRule"/>
</dbReference>
<dbReference type="CDD" id="cd00495">
    <property type="entry name" value="Ribosomal_L25_TL5_CTC"/>
    <property type="match status" value="1"/>
</dbReference>
<dbReference type="Gene3D" id="2.170.120.20">
    <property type="entry name" value="Ribosomal protein L25, beta domain"/>
    <property type="match status" value="1"/>
</dbReference>
<dbReference type="Gene3D" id="2.40.240.10">
    <property type="entry name" value="Ribosomal Protein L25, Chain P"/>
    <property type="match status" value="1"/>
</dbReference>
<dbReference type="HAMAP" id="MF_01336">
    <property type="entry name" value="Ribosomal_bL25"/>
    <property type="match status" value="1"/>
</dbReference>
<dbReference type="HAMAP" id="MF_01334">
    <property type="entry name" value="Ribosomal_bL25_CTC"/>
    <property type="match status" value="1"/>
</dbReference>
<dbReference type="InterPro" id="IPR020056">
    <property type="entry name" value="Rbsml_bL25/Gln-tRNA_synth_N"/>
</dbReference>
<dbReference type="InterPro" id="IPR011035">
    <property type="entry name" value="Ribosomal_bL25/Gln-tRNA_synth"/>
</dbReference>
<dbReference type="InterPro" id="IPR020057">
    <property type="entry name" value="Ribosomal_bL25_b-dom"/>
</dbReference>
<dbReference type="InterPro" id="IPR037121">
    <property type="entry name" value="Ribosomal_bL25_C"/>
</dbReference>
<dbReference type="InterPro" id="IPR001021">
    <property type="entry name" value="Ribosomal_bL25_long"/>
</dbReference>
<dbReference type="InterPro" id="IPR020055">
    <property type="entry name" value="Ribosomal_bL25_short"/>
</dbReference>
<dbReference type="InterPro" id="IPR029751">
    <property type="entry name" value="Ribosomal_L25_dom"/>
</dbReference>
<dbReference type="InterPro" id="IPR020930">
    <property type="entry name" value="Ribosomal_uL5_bac-type"/>
</dbReference>
<dbReference type="NCBIfam" id="TIGR00731">
    <property type="entry name" value="bL25_bact_ctc"/>
    <property type="match status" value="1"/>
</dbReference>
<dbReference type="NCBIfam" id="NF004128">
    <property type="entry name" value="PRK05618.1-2"/>
    <property type="match status" value="1"/>
</dbReference>
<dbReference type="NCBIfam" id="NF004130">
    <property type="entry name" value="PRK05618.1-5"/>
    <property type="match status" value="1"/>
</dbReference>
<dbReference type="NCBIfam" id="NF004612">
    <property type="entry name" value="PRK05943.1"/>
    <property type="match status" value="1"/>
</dbReference>
<dbReference type="PANTHER" id="PTHR33284">
    <property type="entry name" value="RIBOSOMAL PROTEIN L25/GLN-TRNA SYNTHETASE, ANTI-CODON-BINDING DOMAIN-CONTAINING PROTEIN"/>
    <property type="match status" value="1"/>
</dbReference>
<dbReference type="PANTHER" id="PTHR33284:SF1">
    <property type="entry name" value="RIBOSOMAL PROTEIN L25_GLN-TRNA SYNTHETASE, ANTI-CODON-BINDING DOMAIN-CONTAINING PROTEIN"/>
    <property type="match status" value="1"/>
</dbReference>
<dbReference type="Pfam" id="PF01386">
    <property type="entry name" value="Ribosomal_L25p"/>
    <property type="match status" value="1"/>
</dbReference>
<dbReference type="Pfam" id="PF14693">
    <property type="entry name" value="Ribosomal_TL5_C"/>
    <property type="match status" value="1"/>
</dbReference>
<dbReference type="SUPFAM" id="SSF50715">
    <property type="entry name" value="Ribosomal protein L25-like"/>
    <property type="match status" value="1"/>
</dbReference>
<feature type="chain" id="PRO_1000142497" description="Large ribosomal subunit protein bL25">
    <location>
        <begin position="1"/>
        <end position="201"/>
    </location>
</feature>
<protein>
    <recommendedName>
        <fullName evidence="1">Large ribosomal subunit protein bL25</fullName>
    </recommendedName>
    <alternativeName>
        <fullName evidence="2">50S ribosomal protein L25</fullName>
    </alternativeName>
    <alternativeName>
        <fullName evidence="1">General stress protein CTC</fullName>
    </alternativeName>
</protein>
<name>RL25_BURM1</name>
<accession>A9AEY7</accession>
<keyword id="KW-1185">Reference proteome</keyword>
<keyword id="KW-0687">Ribonucleoprotein</keyword>
<keyword id="KW-0689">Ribosomal protein</keyword>
<keyword id="KW-0694">RNA-binding</keyword>
<keyword id="KW-0699">rRNA-binding</keyword>
<gene>
    <name evidence="1" type="primary">rplY</name>
    <name evidence="1" type="synonym">ctc</name>
    <name type="ordered locus">Bmul_0512</name>
    <name type="ordered locus">BMULJ_02748</name>
</gene>
<reference key="1">
    <citation type="submission" date="2007-10" db="EMBL/GenBank/DDBJ databases">
        <title>Complete sequence of chromosome 1 of Burkholderia multivorans ATCC 17616.</title>
        <authorList>
            <person name="Copeland A."/>
            <person name="Lucas S."/>
            <person name="Lapidus A."/>
            <person name="Barry K."/>
            <person name="Glavina del Rio T."/>
            <person name="Dalin E."/>
            <person name="Tice H."/>
            <person name="Pitluck S."/>
            <person name="Chain P."/>
            <person name="Malfatti S."/>
            <person name="Shin M."/>
            <person name="Vergez L."/>
            <person name="Schmutz J."/>
            <person name="Larimer F."/>
            <person name="Land M."/>
            <person name="Hauser L."/>
            <person name="Kyrpides N."/>
            <person name="Kim E."/>
            <person name="Tiedje J."/>
            <person name="Richardson P."/>
        </authorList>
    </citation>
    <scope>NUCLEOTIDE SEQUENCE [LARGE SCALE GENOMIC DNA]</scope>
    <source>
        <strain>ATCC 17616 / 249</strain>
    </source>
</reference>
<reference key="2">
    <citation type="submission" date="2007-04" db="EMBL/GenBank/DDBJ databases">
        <title>Complete genome sequence of Burkholderia multivorans ATCC 17616.</title>
        <authorList>
            <person name="Ohtsubo Y."/>
            <person name="Yamashita A."/>
            <person name="Kurokawa K."/>
            <person name="Takami H."/>
            <person name="Yuhara S."/>
            <person name="Nishiyama E."/>
            <person name="Endo R."/>
            <person name="Miyazaki R."/>
            <person name="Ono A."/>
            <person name="Yano K."/>
            <person name="Ito M."/>
            <person name="Sota M."/>
            <person name="Yuji N."/>
            <person name="Hattori M."/>
            <person name="Tsuda M."/>
        </authorList>
    </citation>
    <scope>NUCLEOTIDE SEQUENCE [LARGE SCALE GENOMIC DNA]</scope>
    <source>
        <strain>ATCC 17616 / 249</strain>
    </source>
</reference>
<comment type="function">
    <text evidence="1">This is one of the proteins that binds to the 5S RNA in the ribosome where it forms part of the central protuberance.</text>
</comment>
<comment type="subunit">
    <text evidence="1">Part of the 50S ribosomal subunit; part of the 5S rRNA/L5/L18/L25 subcomplex. Contacts the 5S rRNA. Binds to the 5S rRNA independently of L5 and L18.</text>
</comment>
<comment type="similarity">
    <text evidence="1">Belongs to the bacterial ribosomal protein bL25 family. CTC subfamily.</text>
</comment>
<sequence length="201" mass="21556">MKVVAFERKEQGTGASRRLRNAGKTTGIVYGGEAAPQMIELDHNALWHALKKEAFHSSILDLEVAGQSQQVLLRDVQYHPFKQLVLHVDFQRVDAKKKLHTKVPLHFLNAEVSPAVKLSSAIVSHVATEIEVECLPAALPEFLEVDLSKIEAGQSIHAKDIALPKGVALTAHVDAENPVIASATIPAGAVSDAAEGETPAA</sequence>